<dbReference type="EC" id="1.17.4.2"/>
<dbReference type="EMBL" id="AJ620503">
    <property type="protein sequence ID" value="CAF05662.1"/>
    <property type="molecule type" value="mRNA"/>
</dbReference>
<dbReference type="SMR" id="Q2PDF6"/>
<dbReference type="SABIO-RK" id="Q2PDF6"/>
<dbReference type="GO" id="GO:0031419">
    <property type="term" value="F:cobalamin binding"/>
    <property type="evidence" value="ECO:0007669"/>
    <property type="project" value="UniProtKB-KW"/>
</dbReference>
<dbReference type="GO" id="GO:0004748">
    <property type="term" value="F:ribonucleoside-diphosphate reductase activity, thioredoxin disulfide as acceptor"/>
    <property type="evidence" value="ECO:0007669"/>
    <property type="project" value="TreeGrafter"/>
</dbReference>
<dbReference type="GO" id="GO:0008998">
    <property type="term" value="F:ribonucleoside-triphosphate reductase (thioredoxin) activity"/>
    <property type="evidence" value="ECO:0007669"/>
    <property type="project" value="UniProtKB-EC"/>
</dbReference>
<dbReference type="GO" id="GO:0006260">
    <property type="term" value="P:DNA replication"/>
    <property type="evidence" value="ECO:0007669"/>
    <property type="project" value="UniProtKB-KW"/>
</dbReference>
<dbReference type="CDD" id="cd01676">
    <property type="entry name" value="RNR_II_monomer"/>
    <property type="match status" value="1"/>
</dbReference>
<dbReference type="Gene3D" id="3.20.70.20">
    <property type="match status" value="3"/>
</dbReference>
<dbReference type="InterPro" id="IPR050862">
    <property type="entry name" value="RdRp_reductase_class-2"/>
</dbReference>
<dbReference type="InterPro" id="IPR054158">
    <property type="entry name" value="RNR-II_ins_dom"/>
</dbReference>
<dbReference type="InterPro" id="IPR040763">
    <property type="entry name" value="RNR_alpha_hel"/>
</dbReference>
<dbReference type="PANTHER" id="PTHR43371:SF1">
    <property type="entry name" value="RIBONUCLEOSIDE-DIPHOSPHATE REDUCTASE"/>
    <property type="match status" value="1"/>
</dbReference>
<dbReference type="PANTHER" id="PTHR43371">
    <property type="entry name" value="VITAMIN B12-DEPENDENT RIBONUCLEOTIDE REDUCTASE"/>
    <property type="match status" value="1"/>
</dbReference>
<dbReference type="Pfam" id="PF21995">
    <property type="entry name" value="RNR-II_ins_dom"/>
    <property type="match status" value="1"/>
</dbReference>
<dbReference type="Pfam" id="PF17975">
    <property type="entry name" value="RNR_Alpha"/>
    <property type="match status" value="1"/>
</dbReference>
<dbReference type="SUPFAM" id="SSF51998">
    <property type="entry name" value="PFL-like glycyl radical enzymes"/>
    <property type="match status" value="1"/>
</dbReference>
<evidence type="ECO:0000250" key="1"/>
<evidence type="ECO:0000269" key="2">
    <source>
    </source>
</evidence>
<evidence type="ECO:0000305" key="3"/>
<organism>
    <name type="scientific">Euglena gracilis</name>
    <dbReference type="NCBI Taxonomy" id="3039"/>
    <lineage>
        <taxon>Eukaryota</taxon>
        <taxon>Discoba</taxon>
        <taxon>Euglenozoa</taxon>
        <taxon>Euglenida</taxon>
        <taxon>Spirocuta</taxon>
        <taxon>Euglenophyceae</taxon>
        <taxon>Euglenales</taxon>
        <taxon>Euglenaceae</taxon>
        <taxon>Euglena</taxon>
    </lineage>
</organism>
<keyword id="KW-0021">Allosteric enzyme</keyword>
<keyword id="KW-0846">Cobalamin</keyword>
<keyword id="KW-0170">Cobalt</keyword>
<keyword id="KW-0903">Direct protein sequencing</keyword>
<keyword id="KW-1015">Disulfide bond</keyword>
<keyword id="KW-0235">DNA replication</keyword>
<keyword id="KW-0560">Oxidoreductase</keyword>
<keyword id="KW-0676">Redox-active center</keyword>
<comment type="catalytic activity">
    <reaction evidence="2">
        <text>a 2'-deoxyribonucleoside 5'-triphosphate + [thioredoxin]-disulfide + H2O = a ribonucleoside 5'-triphosphate + [thioredoxin]-dithiol</text>
        <dbReference type="Rhea" id="RHEA:12701"/>
        <dbReference type="Rhea" id="RHEA-COMP:10698"/>
        <dbReference type="Rhea" id="RHEA-COMP:10700"/>
        <dbReference type="ChEBI" id="CHEBI:15377"/>
        <dbReference type="ChEBI" id="CHEBI:29950"/>
        <dbReference type="ChEBI" id="CHEBI:50058"/>
        <dbReference type="ChEBI" id="CHEBI:61557"/>
        <dbReference type="ChEBI" id="CHEBI:61560"/>
        <dbReference type="EC" id="1.17.4.2"/>
    </reaction>
</comment>
<comment type="cofactor">
    <cofactor evidence="2">
        <name>adenosylcob(III)alamin</name>
        <dbReference type="ChEBI" id="CHEBI:18408"/>
    </cofactor>
</comment>
<comment type="subunit">
    <text evidence="2">Monomer.</text>
</comment>
<comment type="similarity">
    <text evidence="3">Belongs to the class II ribonucleoside-triphosphate reductase family.</text>
</comment>
<accession>Q2PDF6</accession>
<protein>
    <recommendedName>
        <fullName>Adenosylcobalamin-dependent ribonucleoside-triphosphate reductase</fullName>
        <shortName>RTPR</shortName>
        <ecNumber>1.17.4.2</ecNumber>
    </recommendedName>
</protein>
<sequence length="729" mass="82175">MAEKENVHPQVISSFPTPSKALKLSEKSSLKDVQTDNAAVPLVVDETSYPEPTCEFYGGLLGPQLPEAERFVLDPALVEEYRHKKPPFGFNGLGEVVYLRTYAREKDNGQSEVWLDTVQRVVTGTFEVLQHHVVNKLHCHWDAQKAKERSEDMFRRIFEMKFLPPGRGLWAMGSPICRKKGFAAALNNCAFVSTATLEKDRVGPFLFLMDASMLGVGVGFDNAGAGSFTVPGPDDTQPTYKFMIPDKREGWVESLKRLLKAHFCHTADVEFDYSKIREMGTKLKTFGGTSSGPGPLINLHKSIRKILVGEKGKPISVTCITDIMNLIGVCTVAGNIRRSAEIAFGEADCKEFLDLKSYETNPHRVEYGWASNNSIFAKVGMDYSDACERVRTNGEPGFAWLSNMQAFSRMNGKPDYRDQRVLGGNPCLEQSLESMELCCLVETFPDKHETLEDFKRTLYSALLYAKTVTLLPLHWRESNEIMLRNRRIGCSVSGIAQFITNRGLHELKTWLEEGYDILHQYDCQISEWLCIRQSIKLTSVKPSGTISLVAGATPGVHYPESCYYTRRLRMARDSPLLERLIKAGYHVEPCCVAPDVTAIVEFPVAAGNSIRTTRDITMWEQLSLAAFMQRYWADNQVSATITFDPETEGLHLNQALQYFQYQLKGISFLPRYPMGAFKQMPYEAITKEQYEEAIRKVKEDVSLSSANAIAETVEENQQTFCDNDRCIKL</sequence>
<gene>
    <name type="primary">rnr</name>
</gene>
<proteinExistence type="evidence at protein level"/>
<feature type="chain" id="PRO_0000326545" description="Adenosylcobalamin-dependent ribonucleoside-triphosphate reductase">
    <location>
        <begin position="1"/>
        <end position="729"/>
    </location>
</feature>
<feature type="active site" evidence="1">
    <location>
        <position position="427"/>
    </location>
</feature>
<feature type="active site" evidence="1">
    <location>
        <position position="429"/>
    </location>
</feature>
<feature type="disulfide bond" description="Redox-active" evidence="1">
    <location>
        <begin position="189"/>
        <end position="438"/>
    </location>
</feature>
<reference key="1">
    <citation type="journal article" date="2006" name="J. Biol. Chem.">
        <title>Euglena gracilis ribonucleotide reductase: the eukaryote class II enzyme and the possible antiquity of eukaryote B12 dependence.</title>
        <authorList>
            <person name="Torrents E."/>
            <person name="Trevisiol C."/>
            <person name="Rotte C."/>
            <person name="Hellman U."/>
            <person name="Martin W."/>
            <person name="Reichard P."/>
        </authorList>
    </citation>
    <scope>NUCLEOTIDE SEQUENCE [MRNA]</scope>
    <scope>PARTIAL PROTEIN SEQUENCE</scope>
    <scope>CATALYTIC ACTIVITY</scope>
    <scope>COFACTOR</scope>
    <scope>SUBUNIT</scope>
    <source>
        <strain>SAG 1224-5/25</strain>
    </source>
</reference>
<name>RTPR_EUGGR</name>